<sequence>MAEKRNIFLVGPMGAGKSTIGRQLAQQLNMEFYDSDQEIEKRTGADVGWVFDLEGEEGFRDREEKVINELTEKQGIVLATGGGSVKSRETRNRLSARGVVVYLETTIEKQLARTQRDKKRPLLHVETPPREVLEALANERNPLYEEIADVTIRTDDQSAKVVANQIIHMLESN</sequence>
<name>AROK_ECO24</name>
<protein>
    <recommendedName>
        <fullName evidence="1">Shikimate kinase 1</fullName>
        <shortName evidence="1">SK 1</shortName>
        <ecNumber evidence="1">2.7.1.71</ecNumber>
    </recommendedName>
</protein>
<dbReference type="EC" id="2.7.1.71" evidence="1"/>
<dbReference type="EMBL" id="CP000800">
    <property type="protein sequence ID" value="ABV20174.1"/>
    <property type="molecule type" value="Genomic_DNA"/>
</dbReference>
<dbReference type="RefSeq" id="WP_000818618.1">
    <property type="nucleotide sequence ID" value="NC_009801.1"/>
</dbReference>
<dbReference type="SMR" id="A7ZSR5"/>
<dbReference type="GeneID" id="93778608"/>
<dbReference type="KEGG" id="ecw:EcE24377A_3860"/>
<dbReference type="HOGENOM" id="CLU_057607_2_2_6"/>
<dbReference type="UniPathway" id="UPA00053">
    <property type="reaction ID" value="UER00088"/>
</dbReference>
<dbReference type="Proteomes" id="UP000001122">
    <property type="component" value="Chromosome"/>
</dbReference>
<dbReference type="GO" id="GO:0005829">
    <property type="term" value="C:cytosol"/>
    <property type="evidence" value="ECO:0007669"/>
    <property type="project" value="TreeGrafter"/>
</dbReference>
<dbReference type="GO" id="GO:0005524">
    <property type="term" value="F:ATP binding"/>
    <property type="evidence" value="ECO:0007669"/>
    <property type="project" value="UniProtKB-UniRule"/>
</dbReference>
<dbReference type="GO" id="GO:0000287">
    <property type="term" value="F:magnesium ion binding"/>
    <property type="evidence" value="ECO:0007669"/>
    <property type="project" value="UniProtKB-UniRule"/>
</dbReference>
<dbReference type="GO" id="GO:0004765">
    <property type="term" value="F:shikimate kinase activity"/>
    <property type="evidence" value="ECO:0007669"/>
    <property type="project" value="UniProtKB-UniRule"/>
</dbReference>
<dbReference type="GO" id="GO:0008652">
    <property type="term" value="P:amino acid biosynthetic process"/>
    <property type="evidence" value="ECO:0007669"/>
    <property type="project" value="UniProtKB-KW"/>
</dbReference>
<dbReference type="GO" id="GO:0009073">
    <property type="term" value="P:aromatic amino acid family biosynthetic process"/>
    <property type="evidence" value="ECO:0007669"/>
    <property type="project" value="UniProtKB-KW"/>
</dbReference>
<dbReference type="GO" id="GO:0009423">
    <property type="term" value="P:chorismate biosynthetic process"/>
    <property type="evidence" value="ECO:0007669"/>
    <property type="project" value="UniProtKB-UniRule"/>
</dbReference>
<dbReference type="CDD" id="cd00464">
    <property type="entry name" value="SK"/>
    <property type="match status" value="1"/>
</dbReference>
<dbReference type="FunFam" id="3.40.50.300:FF:000099">
    <property type="entry name" value="Shikimate kinase 1"/>
    <property type="match status" value="1"/>
</dbReference>
<dbReference type="Gene3D" id="3.40.50.300">
    <property type="entry name" value="P-loop containing nucleotide triphosphate hydrolases"/>
    <property type="match status" value="1"/>
</dbReference>
<dbReference type="HAMAP" id="MF_00109">
    <property type="entry name" value="Shikimate_kinase"/>
    <property type="match status" value="1"/>
</dbReference>
<dbReference type="InterPro" id="IPR027417">
    <property type="entry name" value="P-loop_NTPase"/>
</dbReference>
<dbReference type="InterPro" id="IPR031322">
    <property type="entry name" value="Shikimate/glucono_kinase"/>
</dbReference>
<dbReference type="InterPro" id="IPR000623">
    <property type="entry name" value="Shikimate_kinase/TSH1"/>
</dbReference>
<dbReference type="InterPro" id="IPR023000">
    <property type="entry name" value="Shikimate_kinase_CS"/>
</dbReference>
<dbReference type="NCBIfam" id="NF003456">
    <property type="entry name" value="PRK05057.1"/>
    <property type="match status" value="1"/>
</dbReference>
<dbReference type="PANTHER" id="PTHR21087">
    <property type="entry name" value="SHIKIMATE KINASE"/>
    <property type="match status" value="1"/>
</dbReference>
<dbReference type="PANTHER" id="PTHR21087:SF16">
    <property type="entry name" value="SHIKIMATE KINASE 1, CHLOROPLASTIC"/>
    <property type="match status" value="1"/>
</dbReference>
<dbReference type="Pfam" id="PF01202">
    <property type="entry name" value="SKI"/>
    <property type="match status" value="1"/>
</dbReference>
<dbReference type="PRINTS" id="PR01100">
    <property type="entry name" value="SHIKIMTKNASE"/>
</dbReference>
<dbReference type="SUPFAM" id="SSF52540">
    <property type="entry name" value="P-loop containing nucleoside triphosphate hydrolases"/>
    <property type="match status" value="1"/>
</dbReference>
<dbReference type="PROSITE" id="PS01128">
    <property type="entry name" value="SHIKIMATE_KINASE"/>
    <property type="match status" value="1"/>
</dbReference>
<proteinExistence type="inferred from homology"/>
<accession>A7ZSR5</accession>
<evidence type="ECO:0000255" key="1">
    <source>
        <dbReference type="HAMAP-Rule" id="MF_00109"/>
    </source>
</evidence>
<organism>
    <name type="scientific">Escherichia coli O139:H28 (strain E24377A / ETEC)</name>
    <dbReference type="NCBI Taxonomy" id="331111"/>
    <lineage>
        <taxon>Bacteria</taxon>
        <taxon>Pseudomonadati</taxon>
        <taxon>Pseudomonadota</taxon>
        <taxon>Gammaproteobacteria</taxon>
        <taxon>Enterobacterales</taxon>
        <taxon>Enterobacteriaceae</taxon>
        <taxon>Escherichia</taxon>
    </lineage>
</organism>
<comment type="function">
    <text evidence="1">Catalyzes the specific phosphorylation of the 3-hydroxyl group of shikimic acid using ATP as a cosubstrate.</text>
</comment>
<comment type="catalytic activity">
    <reaction evidence="1">
        <text>shikimate + ATP = 3-phosphoshikimate + ADP + H(+)</text>
        <dbReference type="Rhea" id="RHEA:13121"/>
        <dbReference type="ChEBI" id="CHEBI:15378"/>
        <dbReference type="ChEBI" id="CHEBI:30616"/>
        <dbReference type="ChEBI" id="CHEBI:36208"/>
        <dbReference type="ChEBI" id="CHEBI:145989"/>
        <dbReference type="ChEBI" id="CHEBI:456216"/>
        <dbReference type="EC" id="2.7.1.71"/>
    </reaction>
</comment>
<comment type="cofactor">
    <cofactor evidence="1">
        <name>Mg(2+)</name>
        <dbReference type="ChEBI" id="CHEBI:18420"/>
    </cofactor>
    <text evidence="1">Binds 1 Mg(2+) ion per subunit.</text>
</comment>
<comment type="pathway">
    <text evidence="1">Metabolic intermediate biosynthesis; chorismate biosynthesis; chorismate from D-erythrose 4-phosphate and phosphoenolpyruvate: step 5/7.</text>
</comment>
<comment type="subunit">
    <text evidence="1">Monomer.</text>
</comment>
<comment type="subcellular location">
    <subcellularLocation>
        <location evidence="1">Cytoplasm</location>
    </subcellularLocation>
</comment>
<comment type="similarity">
    <text evidence="1">Belongs to the shikimate kinase family.</text>
</comment>
<gene>
    <name evidence="1" type="primary">aroK</name>
    <name type="ordered locus">EcE24377A_3860</name>
</gene>
<reference key="1">
    <citation type="journal article" date="2008" name="J. Bacteriol.">
        <title>The pangenome structure of Escherichia coli: comparative genomic analysis of E. coli commensal and pathogenic isolates.</title>
        <authorList>
            <person name="Rasko D.A."/>
            <person name="Rosovitz M.J."/>
            <person name="Myers G.S.A."/>
            <person name="Mongodin E.F."/>
            <person name="Fricke W.F."/>
            <person name="Gajer P."/>
            <person name="Crabtree J."/>
            <person name="Sebaihia M."/>
            <person name="Thomson N.R."/>
            <person name="Chaudhuri R."/>
            <person name="Henderson I.R."/>
            <person name="Sperandio V."/>
            <person name="Ravel J."/>
        </authorList>
    </citation>
    <scope>NUCLEOTIDE SEQUENCE [LARGE SCALE GENOMIC DNA]</scope>
    <source>
        <strain>E24377A / ETEC</strain>
    </source>
</reference>
<keyword id="KW-0028">Amino-acid biosynthesis</keyword>
<keyword id="KW-0057">Aromatic amino acid biosynthesis</keyword>
<keyword id="KW-0067">ATP-binding</keyword>
<keyword id="KW-0963">Cytoplasm</keyword>
<keyword id="KW-0418">Kinase</keyword>
<keyword id="KW-0460">Magnesium</keyword>
<keyword id="KW-0479">Metal-binding</keyword>
<keyword id="KW-0547">Nucleotide-binding</keyword>
<keyword id="KW-1185">Reference proteome</keyword>
<keyword id="KW-0808">Transferase</keyword>
<feature type="chain" id="PRO_1000057723" description="Shikimate kinase 1">
    <location>
        <begin position="1"/>
        <end position="173"/>
    </location>
</feature>
<feature type="binding site" evidence="1">
    <location>
        <begin position="14"/>
        <end position="19"/>
    </location>
    <ligand>
        <name>ATP</name>
        <dbReference type="ChEBI" id="CHEBI:30616"/>
    </ligand>
</feature>
<feature type="binding site" evidence="1">
    <location>
        <position position="18"/>
    </location>
    <ligand>
        <name>Mg(2+)</name>
        <dbReference type="ChEBI" id="CHEBI:18420"/>
    </ligand>
</feature>
<feature type="binding site" evidence="1">
    <location>
        <position position="36"/>
    </location>
    <ligand>
        <name>substrate</name>
    </ligand>
</feature>
<feature type="binding site" evidence="1">
    <location>
        <position position="60"/>
    </location>
    <ligand>
        <name>substrate</name>
    </ligand>
</feature>
<feature type="binding site" evidence="1">
    <location>
        <position position="82"/>
    </location>
    <ligand>
        <name>substrate</name>
    </ligand>
</feature>
<feature type="binding site" evidence="1">
    <location>
        <position position="120"/>
    </location>
    <ligand>
        <name>ATP</name>
        <dbReference type="ChEBI" id="CHEBI:30616"/>
    </ligand>
</feature>
<feature type="binding site" evidence="1">
    <location>
        <position position="140"/>
    </location>
    <ligand>
        <name>substrate</name>
    </ligand>
</feature>
<feature type="binding site" evidence="1">
    <location>
        <position position="157"/>
    </location>
    <ligand>
        <name>ATP</name>
        <dbReference type="ChEBI" id="CHEBI:30616"/>
    </ligand>
</feature>